<comment type="function">
    <text evidence="1 2">Actin-binding protein involved in actin cytoskeleton regulation and dynamics. Increases the number and size of actin stress fibers and inhibits membrane ruffling. Inhibits actin filament depolymerization. Bundles actin filaments, delays filament nucleation and reduces formation of branched filaments (By similarity). Acts as a negative regulator of primary cilium formation (By similarity). Plays a role in cholesterol homeostasis. Influences plasma cholesterol levels through regulation of intestinal cholesterol absorption. May act as a scaffold protein by regulating NPC1L1 transportation, an essential protein for cholesterol absorption, to the plasma membrane by recruiting MYO5B to NPC1L1, and thus facilitates cholesterol uptake (By similarity).</text>
</comment>
<comment type="subunit">
    <text evidence="1 2">Interacts with NPC1L1; bridges NPC1L1 with MYO5B. Interacts with MYO5B; bridges MYO5B with NPC1L1 (By similarity). Interacts with PXN; this complex stabilizes actin dynamics. Interacts with F-actin and G-actin (By similarity). Interacts with LUZP1 (via C-terminus); both proteins restrict ciliation and may work together to regulate this process (By similarity). Binds RAB40B (GTP-bound); interaction influences LIMA1 subcellular localization in lamellipodia during cell migration (By similarity).</text>
</comment>
<comment type="subcellular location">
    <subcellularLocation>
        <location evidence="2">Cytoplasm</location>
    </subcellularLocation>
    <subcellularLocation>
        <location evidence="2">Cell junction</location>
        <location evidence="2">Focal adhesion</location>
    </subcellularLocation>
    <subcellularLocation>
        <location evidence="2">Cytoplasm</location>
        <location evidence="2">Cytoskeleton</location>
    </subcellularLocation>
    <subcellularLocation>
        <location evidence="2">Cytoplasm</location>
        <location evidence="2">Cytoskeleton</location>
        <location evidence="2">Stress fiber</location>
    </subcellularLocation>
    <subcellularLocation>
        <location evidence="1">Cell membrane</location>
    </subcellularLocation>
    <subcellularLocation>
        <location evidence="2">Cell projection</location>
        <location evidence="2">Ruffle</location>
    </subcellularLocation>
    <subcellularLocation>
        <location evidence="2">Cell projection</location>
        <location evidence="2">Lamellipodium</location>
    </subcellularLocation>
    <text evidence="1 2">This cytoskeletal protein colocalizes with actin stress fibers and focal adhesion plaques. Expressed mainly in the brush border membrane of the small intestine and colocalizes with NPC1L1 and MYO5B (By similarity). Colocalizes with PXN at focal adhesions in mesangial cells (By similarity). Colocalizes with actin stress fibers in quiescent cells. PDGF stimulation induced disassembly of stress fibers and formation of peripheral and dorsal ruffles, where LIMA1 is relocalized (By similarity). Localized at the lamellipodia, just behind lamellipodia actin ruffles (By similarity).</text>
</comment>
<comment type="alternative products">
    <event type="alternative promoter"/>
    <isoform>
        <id>B0KYV5-1</id>
        <name evidence="5">1</name>
        <name evidence="6">EPLIN-beta</name>
        <name evidence="8">EPLIN-b</name>
        <sequence type="displayed"/>
    </isoform>
    <isoform>
        <id>B0KYV5-2</id>
        <name evidence="5">2</name>
        <name evidence="6">EPLIN-alpha</name>
        <name evidence="9">EPLIN-a</name>
        <sequence type="described" ref="VSP_044628"/>
    </isoform>
</comment>
<comment type="tissue specificity">
    <text evidence="5">Widely expressed. Highest levels of isoform 2 are expressed in lung, spleen and small intestine. Isoform 2 is expressed at higher levels than isoform 1 in most tissues except liver, fat and kidney. Isoform 1 and isoform 2 are expressed at low levels in skeletal muscle, heart, stomach and lymph.</text>
</comment>
<comment type="developmental stage">
    <text evidence="5">Isoform 1 is expressed at low levels at embryonic day 33 (33 dpc) and in the adult. Isoform 2 is expressed abundantly throughout embryonic development with a peak at 65 dpc and is expressed at lower levels in the neonate and adult. Isoform 1 and isoform 2 are expressed at similar levels in the adult.</text>
</comment>
<comment type="domain">
    <text evidence="2">Contains at least 2 actin-binding domains, one on each side of the LIM domain. Both domains bind actin monomers and filaments. The C-terminal domain binds filaments more efficiently than the N-terminus (By similarity).</text>
</comment>
<comment type="PTM">
    <text evidence="1">Phosphorylation of the C-terminal region by MAPK1/MAPK3 reduces its association with F-actin and contributes to actin filament reorganization and enhances cell motility.</text>
</comment>
<comment type="PTM">
    <text evidence="2">Ubiquitinated by the ECS(RAB40B) complex leading to its degradation.</text>
</comment>
<protein>
    <recommendedName>
        <fullName evidence="2">LIM domain and actin-binding protein 1</fullName>
    </recommendedName>
    <alternativeName>
        <fullName evidence="6">Epithelial protein lost in neoplasm</fullName>
    </alternativeName>
</protein>
<proteinExistence type="evidence at transcript level"/>
<organism>
    <name type="scientific">Sus scrofa</name>
    <name type="common">Pig</name>
    <dbReference type="NCBI Taxonomy" id="9823"/>
    <lineage>
        <taxon>Eukaryota</taxon>
        <taxon>Metazoa</taxon>
        <taxon>Chordata</taxon>
        <taxon>Craniata</taxon>
        <taxon>Vertebrata</taxon>
        <taxon>Euteleostomi</taxon>
        <taxon>Mammalia</taxon>
        <taxon>Eutheria</taxon>
        <taxon>Laurasiatheria</taxon>
        <taxon>Artiodactyla</taxon>
        <taxon>Suina</taxon>
        <taxon>Suidae</taxon>
        <taxon>Sus</taxon>
    </lineage>
</organism>
<reference evidence="7 8" key="1">
    <citation type="journal article" date="2007" name="Anim. Biotechnol.">
        <title>Characterization of porcine EPLIN gene revealed distinct expression patterns for the two isoforms.</title>
        <authorList>
            <person name="Wang H."/>
            <person name="Wang H."/>
            <person name="Zhu Z."/>
            <person name="Yang S."/>
            <person name="Feng S."/>
            <person name="Li K."/>
        </authorList>
    </citation>
    <scope>NUCLEOTIDE SEQUENCE [MRNA] (ISOFORMS 1 AND 2)</scope>
    <scope>ALTERNATIVE PROMOTER USAGE</scope>
    <scope>TISSUE SPECIFICITY</scope>
    <scope>DEVELOPMENTAL STAGE</scope>
    <source>
        <tissue evidence="5">Longissimus dorsi muscle</tissue>
    </source>
</reference>
<gene>
    <name evidence="2" type="primary">LIMA1</name>
    <name evidence="6" type="synonym">EPLIN</name>
</gene>
<dbReference type="EMBL" id="DQ364062">
    <property type="protein sequence ID" value="ABC96266.1"/>
    <property type="molecule type" value="mRNA"/>
</dbReference>
<dbReference type="EMBL" id="DQ364063">
    <property type="protein sequence ID" value="ABC96267.1"/>
    <property type="molecule type" value="mRNA"/>
</dbReference>
<dbReference type="RefSeq" id="NP_001108148.1">
    <molecule id="B0KYV5-1"/>
    <property type="nucleotide sequence ID" value="NM_001114676.1"/>
</dbReference>
<dbReference type="SMR" id="B0KYV5"/>
<dbReference type="FunCoup" id="B0KYV5">
    <property type="interactions" value="870"/>
</dbReference>
<dbReference type="STRING" id="9823.ENSSSCP00000042877"/>
<dbReference type="PaxDb" id="9823-ENSSSCP00000026919"/>
<dbReference type="PeptideAtlas" id="B0KYV5"/>
<dbReference type="GeneID" id="100137084"/>
<dbReference type="KEGG" id="ssc:100137084"/>
<dbReference type="CTD" id="51474"/>
<dbReference type="eggNOG" id="KOG1700">
    <property type="taxonomic scope" value="Eukaryota"/>
</dbReference>
<dbReference type="InParanoid" id="B0KYV5"/>
<dbReference type="OrthoDB" id="6129702at2759"/>
<dbReference type="Proteomes" id="UP000008227">
    <property type="component" value="Unplaced"/>
</dbReference>
<dbReference type="Proteomes" id="UP000314985">
    <property type="component" value="Unplaced"/>
</dbReference>
<dbReference type="Proteomes" id="UP000694570">
    <property type="component" value="Unplaced"/>
</dbReference>
<dbReference type="Proteomes" id="UP000694571">
    <property type="component" value="Unplaced"/>
</dbReference>
<dbReference type="Proteomes" id="UP000694720">
    <property type="component" value="Unplaced"/>
</dbReference>
<dbReference type="Proteomes" id="UP000694722">
    <property type="component" value="Unplaced"/>
</dbReference>
<dbReference type="Proteomes" id="UP000694723">
    <property type="component" value="Unplaced"/>
</dbReference>
<dbReference type="Proteomes" id="UP000694724">
    <property type="component" value="Unplaced"/>
</dbReference>
<dbReference type="Proteomes" id="UP000694725">
    <property type="component" value="Unplaced"/>
</dbReference>
<dbReference type="Proteomes" id="UP000694726">
    <property type="component" value="Unplaced"/>
</dbReference>
<dbReference type="Proteomes" id="UP000694727">
    <property type="component" value="Unplaced"/>
</dbReference>
<dbReference type="Proteomes" id="UP000694728">
    <property type="component" value="Unplaced"/>
</dbReference>
<dbReference type="GO" id="GO:0015629">
    <property type="term" value="C:actin cytoskeleton"/>
    <property type="evidence" value="ECO:0000318"/>
    <property type="project" value="GO_Central"/>
</dbReference>
<dbReference type="GO" id="GO:0005884">
    <property type="term" value="C:actin filament"/>
    <property type="evidence" value="ECO:0000250"/>
    <property type="project" value="UniProtKB"/>
</dbReference>
<dbReference type="GO" id="GO:0031526">
    <property type="term" value="C:brush border membrane"/>
    <property type="evidence" value="ECO:0000250"/>
    <property type="project" value="UniProtKB"/>
</dbReference>
<dbReference type="GO" id="GO:0032154">
    <property type="term" value="C:cleavage furrow"/>
    <property type="evidence" value="ECO:0000250"/>
    <property type="project" value="UniProtKB"/>
</dbReference>
<dbReference type="GO" id="GO:0005737">
    <property type="term" value="C:cytoplasm"/>
    <property type="evidence" value="ECO:0007669"/>
    <property type="project" value="UniProtKB-SubCell"/>
</dbReference>
<dbReference type="GO" id="GO:0005925">
    <property type="term" value="C:focal adhesion"/>
    <property type="evidence" value="ECO:0000250"/>
    <property type="project" value="UniProtKB"/>
</dbReference>
<dbReference type="GO" id="GO:0005886">
    <property type="term" value="C:plasma membrane"/>
    <property type="evidence" value="ECO:0000318"/>
    <property type="project" value="GO_Central"/>
</dbReference>
<dbReference type="GO" id="GO:0001726">
    <property type="term" value="C:ruffle"/>
    <property type="evidence" value="ECO:0000250"/>
    <property type="project" value="UniProtKB"/>
</dbReference>
<dbReference type="GO" id="GO:0001725">
    <property type="term" value="C:stress fiber"/>
    <property type="evidence" value="ECO:0007669"/>
    <property type="project" value="UniProtKB-SubCell"/>
</dbReference>
<dbReference type="GO" id="GO:0051015">
    <property type="term" value="F:actin filament binding"/>
    <property type="evidence" value="ECO:0000318"/>
    <property type="project" value="GO_Central"/>
</dbReference>
<dbReference type="GO" id="GO:0046872">
    <property type="term" value="F:metal ion binding"/>
    <property type="evidence" value="ECO:0007669"/>
    <property type="project" value="UniProtKB-KW"/>
</dbReference>
<dbReference type="GO" id="GO:0051017">
    <property type="term" value="P:actin filament bundle assembly"/>
    <property type="evidence" value="ECO:0000318"/>
    <property type="project" value="GO_Central"/>
</dbReference>
<dbReference type="GO" id="GO:0016477">
    <property type="term" value="P:cell migration"/>
    <property type="evidence" value="ECO:0000250"/>
    <property type="project" value="UniProtKB"/>
</dbReference>
<dbReference type="GO" id="GO:0042632">
    <property type="term" value="P:cholesterol homeostasis"/>
    <property type="evidence" value="ECO:0000250"/>
    <property type="project" value="UniProtKB"/>
</dbReference>
<dbReference type="GO" id="GO:0008203">
    <property type="term" value="P:cholesterol metabolic process"/>
    <property type="evidence" value="ECO:0007669"/>
    <property type="project" value="UniProtKB-KW"/>
</dbReference>
<dbReference type="GO" id="GO:0030299">
    <property type="term" value="P:intestinal cholesterol absorption"/>
    <property type="evidence" value="ECO:0000250"/>
    <property type="project" value="UniProtKB"/>
</dbReference>
<dbReference type="GO" id="GO:1902018">
    <property type="term" value="P:negative regulation of cilium assembly"/>
    <property type="evidence" value="ECO:0000250"/>
    <property type="project" value="UniProtKB"/>
</dbReference>
<dbReference type="GO" id="GO:0031529">
    <property type="term" value="P:ruffle organization"/>
    <property type="evidence" value="ECO:0000250"/>
    <property type="project" value="UniProtKB"/>
</dbReference>
<dbReference type="CDD" id="cd09485">
    <property type="entry name" value="LIM_Eplin_alpha_beta"/>
    <property type="match status" value="1"/>
</dbReference>
<dbReference type="FunFam" id="2.10.110.10:FF:000002">
    <property type="entry name" value="LIM domain and actin-binding 1"/>
    <property type="match status" value="1"/>
</dbReference>
<dbReference type="Gene3D" id="2.10.110.10">
    <property type="entry name" value="Cysteine Rich Protein"/>
    <property type="match status" value="1"/>
</dbReference>
<dbReference type="InterPro" id="IPR028740">
    <property type="entry name" value="EPLIN_Lim_dom"/>
</dbReference>
<dbReference type="InterPro" id="IPR001781">
    <property type="entry name" value="Znf_LIM"/>
</dbReference>
<dbReference type="PANTHER" id="PTHR24206">
    <property type="entry name" value="OS06G0237300 PROTEIN"/>
    <property type="match status" value="1"/>
</dbReference>
<dbReference type="Pfam" id="PF00412">
    <property type="entry name" value="LIM"/>
    <property type="match status" value="1"/>
</dbReference>
<dbReference type="SMART" id="SM00132">
    <property type="entry name" value="LIM"/>
    <property type="match status" value="1"/>
</dbReference>
<dbReference type="SUPFAM" id="SSF57716">
    <property type="entry name" value="Glucocorticoid receptor-like (DNA-binding domain)"/>
    <property type="match status" value="2"/>
</dbReference>
<dbReference type="PROSITE" id="PS00478">
    <property type="entry name" value="LIM_DOMAIN_1"/>
    <property type="match status" value="1"/>
</dbReference>
<dbReference type="PROSITE" id="PS50023">
    <property type="entry name" value="LIM_DOMAIN_2"/>
    <property type="match status" value="1"/>
</dbReference>
<name>LIMA1_PIG</name>
<feature type="chain" id="PRO_0000420756" description="LIM domain and actin-binding protein 1">
    <location>
        <begin position="1"/>
        <end position="756"/>
    </location>
</feature>
<feature type="domain" description="LIM zinc-binding" evidence="3">
    <location>
        <begin position="384"/>
        <end position="444"/>
    </location>
</feature>
<feature type="region of interest" description="Disordered" evidence="4">
    <location>
        <begin position="44"/>
        <end position="183"/>
    </location>
</feature>
<feature type="region of interest" description="Disordered" evidence="4">
    <location>
        <begin position="204"/>
        <end position="377"/>
    </location>
</feature>
<feature type="region of interest" description="Required for interaction with MYO5B" evidence="1">
    <location>
        <begin position="489"/>
        <end position="509"/>
    </location>
</feature>
<feature type="region of interest" description="Disordered" evidence="4">
    <location>
        <begin position="508"/>
        <end position="726"/>
    </location>
</feature>
<feature type="short sequence motif" description="Required for interaction with NPC1L1" evidence="1">
    <location>
        <begin position="164"/>
        <end position="166"/>
    </location>
</feature>
<feature type="compositionally biased region" description="Basic and acidic residues" evidence="4">
    <location>
        <begin position="44"/>
        <end position="56"/>
    </location>
</feature>
<feature type="compositionally biased region" description="Low complexity" evidence="4">
    <location>
        <begin position="107"/>
        <end position="118"/>
    </location>
</feature>
<feature type="compositionally biased region" description="Basic and acidic residues" evidence="4">
    <location>
        <begin position="140"/>
        <end position="173"/>
    </location>
</feature>
<feature type="compositionally biased region" description="Basic and acidic residues" evidence="4">
    <location>
        <begin position="245"/>
        <end position="254"/>
    </location>
</feature>
<feature type="compositionally biased region" description="Polar residues" evidence="4">
    <location>
        <begin position="274"/>
        <end position="287"/>
    </location>
</feature>
<feature type="compositionally biased region" description="Basic and acidic residues" evidence="4">
    <location>
        <begin position="294"/>
        <end position="303"/>
    </location>
</feature>
<feature type="compositionally biased region" description="Basic and acidic residues" evidence="4">
    <location>
        <begin position="512"/>
        <end position="523"/>
    </location>
</feature>
<feature type="compositionally biased region" description="Low complexity" evidence="4">
    <location>
        <begin position="533"/>
        <end position="542"/>
    </location>
</feature>
<feature type="compositionally biased region" description="Basic and acidic residues" evidence="4">
    <location>
        <begin position="552"/>
        <end position="563"/>
    </location>
</feature>
<feature type="compositionally biased region" description="Basic and acidic residues" evidence="4">
    <location>
        <begin position="627"/>
        <end position="637"/>
    </location>
</feature>
<feature type="compositionally biased region" description="Polar residues" evidence="4">
    <location>
        <begin position="638"/>
        <end position="651"/>
    </location>
</feature>
<feature type="compositionally biased region" description="Basic and acidic residues" evidence="4">
    <location>
        <begin position="652"/>
        <end position="667"/>
    </location>
</feature>
<feature type="compositionally biased region" description="Polar residues" evidence="4">
    <location>
        <begin position="691"/>
        <end position="721"/>
    </location>
</feature>
<feature type="modified residue" description="N-acetylmethionine" evidence="2">
    <location>
        <position position="1"/>
    </location>
</feature>
<feature type="modified residue" description="Phosphoserine" evidence="2">
    <location>
        <position position="15"/>
    </location>
</feature>
<feature type="modified residue" description="Phosphoserine" evidence="2">
    <location>
        <position position="55"/>
    </location>
</feature>
<feature type="modified residue" description="Phosphoserine" evidence="2">
    <location>
        <position position="130"/>
    </location>
</feature>
<feature type="modified residue" description="Phosphoserine" evidence="2">
    <location>
        <position position="221"/>
    </location>
</feature>
<feature type="modified residue" description="Phosphotyrosine" evidence="2">
    <location>
        <position position="225"/>
    </location>
</feature>
<feature type="modified residue" description="Phosphoserine" evidence="1">
    <location>
        <position position="226"/>
    </location>
</feature>
<feature type="modified residue" description="Phosphoserine" evidence="1">
    <location>
        <position position="238"/>
    </location>
</feature>
<feature type="modified residue" description="Phosphoserine" evidence="2">
    <location>
        <position position="259"/>
    </location>
</feature>
<feature type="modified residue" description="Phosphoserine" evidence="2">
    <location>
        <position position="339"/>
    </location>
</feature>
<feature type="modified residue" description="Phosphoserine" evidence="2">
    <location>
        <position position="346"/>
    </location>
</feature>
<feature type="modified residue" description="Phosphoserine" evidence="2">
    <location>
        <position position="358"/>
    </location>
</feature>
<feature type="modified residue" description="Phosphoserine" evidence="2">
    <location>
        <position position="365"/>
    </location>
</feature>
<feature type="modified residue" description="Phosphoserine" evidence="2">
    <location>
        <position position="370"/>
    </location>
</feature>
<feature type="modified residue" description="N6-succinyllysine" evidence="1">
    <location>
        <position position="435"/>
    </location>
</feature>
<feature type="modified residue" description="Phosphoserine" evidence="2">
    <location>
        <position position="486"/>
    </location>
</feature>
<feature type="modified residue" description="Phosphoserine" evidence="2">
    <location>
        <position position="597"/>
    </location>
</feature>
<feature type="modified residue" description="Phosphoserine" evidence="2">
    <location>
        <position position="600"/>
    </location>
</feature>
<feature type="modified residue" description="Phosphoserine" evidence="2">
    <location>
        <position position="605"/>
    </location>
</feature>
<feature type="modified residue" description="Phosphoserine" evidence="2">
    <location>
        <position position="613"/>
    </location>
</feature>
<feature type="modified residue" description="Phosphoserine" evidence="2">
    <location>
        <position position="695"/>
    </location>
</feature>
<feature type="modified residue" description="Phosphoserine" evidence="2">
    <location>
        <position position="723"/>
    </location>
</feature>
<feature type="modified residue" description="Phosphoserine" evidence="1">
    <location>
        <position position="738"/>
    </location>
</feature>
<feature type="splice variant" id="VSP_044628" description="In isoform 2." evidence="6">
    <location>
        <begin position="1"/>
        <end position="156"/>
    </location>
</feature>
<accession>B0KYV5</accession>
<accession>B0KYV6</accession>
<keyword id="KW-0007">Acetylation</keyword>
<keyword id="KW-0877">Alternative promoter usage</keyword>
<keyword id="KW-0965">Cell junction</keyword>
<keyword id="KW-1003">Cell membrane</keyword>
<keyword id="KW-0966">Cell projection</keyword>
<keyword id="KW-0153">Cholesterol metabolism</keyword>
<keyword id="KW-0963">Cytoplasm</keyword>
<keyword id="KW-0206">Cytoskeleton</keyword>
<keyword id="KW-0440">LIM domain</keyword>
<keyword id="KW-0443">Lipid metabolism</keyword>
<keyword id="KW-0472">Membrane</keyword>
<keyword id="KW-0479">Metal-binding</keyword>
<keyword id="KW-0597">Phosphoprotein</keyword>
<keyword id="KW-1185">Reference proteome</keyword>
<keyword id="KW-0753">Steroid metabolism</keyword>
<keyword id="KW-1207">Sterol metabolism</keyword>
<keyword id="KW-0832">Ubl conjugation</keyword>
<keyword id="KW-0862">Zinc</keyword>
<sequence length="756" mass="83990">MESTPFNRQQWTSLSLRVTAKELSLVNKNKSSAIVEIFSKYQKAAEEANMEKRRSNTENLPQHFRRGNLTVLKKKWENPAPGVESLPESTRNSSAEVRHRGDPPPAEVASSSASGVEADQGVCPRPRFSSPPEVPYPNPRIKDTEHLKDHSAESKKMENCLAESRHEVGKPETSENAEASNKIEKYNVPLNRLKMMFERGEPAQTKILRAQSRSTGGRKISENSYSLDDLEIGPGQLSSSAFNTEKSESRRNLEFPRLSDTSIKDRMAKYQAAVSKQSSSTNYTNELKANGGEIKTHKLEQKENVPPGPEVCISHQDGEKVSASENSLAACSTPPEDDSCKSQVKSDVQQPVHPKPLSPVARASSLSESSPPKAVKKFQAPARETCVECQKTVYPMERLLANQQVFHISCFRCSYCNNKLSLGTYASLHGRIYCKPHFNQLFKSKGNYDEGFGHRPHKDLWASKLENEETLERPAQLPNAAEIPQSPGVEDAPIAKVGVLTASMEAKASSQLEKEDKPAETKKLRIAWPPPTELSSSGSALEEGIKVSKPKWPPEDEVSKPEAPEDVDLDLKKLRRSSSLKERSRPFTVAASFRTASVKSPKPLSPPMRKGWSLSEQSEEFGGGVAAERKQMEKASASEKNGSVGKTTWPSKESRGGEAAGRSKEVQDFEIGSENLIENGASLDEGDRDLLQQQSPLEPKSKNWSSFADNTSAKEFTTQKQKSQDVEFWEGEVVEELSVEEQIKRNRYYDEEEDEE</sequence>
<evidence type="ECO:0000250" key="1">
    <source>
        <dbReference type="UniProtKB" id="Q9ERG0"/>
    </source>
</evidence>
<evidence type="ECO:0000250" key="2">
    <source>
        <dbReference type="UniProtKB" id="Q9UHB6"/>
    </source>
</evidence>
<evidence type="ECO:0000255" key="3">
    <source>
        <dbReference type="PROSITE-ProRule" id="PRU00125"/>
    </source>
</evidence>
<evidence type="ECO:0000256" key="4">
    <source>
        <dbReference type="SAM" id="MobiDB-lite"/>
    </source>
</evidence>
<evidence type="ECO:0000269" key="5">
    <source>
    </source>
</evidence>
<evidence type="ECO:0000303" key="6">
    <source>
    </source>
</evidence>
<evidence type="ECO:0000305" key="7"/>
<evidence type="ECO:0000312" key="8">
    <source>
        <dbReference type="EMBL" id="ABC96266.1"/>
    </source>
</evidence>
<evidence type="ECO:0000312" key="9">
    <source>
        <dbReference type="EMBL" id="ABC96267.1"/>
    </source>
</evidence>